<evidence type="ECO:0000255" key="1">
    <source>
        <dbReference type="HAMAP-Rule" id="MF_00735"/>
    </source>
</evidence>
<feature type="chain" id="PRO_1000212762" description="Ribosomal protein L11 methyltransferase">
    <location>
        <begin position="1"/>
        <end position="292"/>
    </location>
</feature>
<feature type="binding site" evidence="1">
    <location>
        <position position="143"/>
    </location>
    <ligand>
        <name>S-adenosyl-L-methionine</name>
        <dbReference type="ChEBI" id="CHEBI:59789"/>
    </ligand>
</feature>
<feature type="binding site" evidence="1">
    <location>
        <position position="164"/>
    </location>
    <ligand>
        <name>S-adenosyl-L-methionine</name>
        <dbReference type="ChEBI" id="CHEBI:59789"/>
    </ligand>
</feature>
<feature type="binding site" evidence="1">
    <location>
        <position position="186"/>
    </location>
    <ligand>
        <name>S-adenosyl-L-methionine</name>
        <dbReference type="ChEBI" id="CHEBI:59789"/>
    </ligand>
</feature>
<feature type="binding site" evidence="1">
    <location>
        <position position="228"/>
    </location>
    <ligand>
        <name>S-adenosyl-L-methionine</name>
        <dbReference type="ChEBI" id="CHEBI:59789"/>
    </ligand>
</feature>
<name>PRMA_TOLAT</name>
<sequence>MPWIQIKINATAKTANKVSNMLMGLGAQAVTYMDAQDTPVYEPLPGETKLWGDTRCIGLFDAEVDPAPIVAFFQQHFGEDVPYQVELLEDKDWVREWMEHFQPMQFGERLWICPSWRDVPDPTAVNVLLDPGLAFGTGTHPTTALCLQWLDSLDLKGKTLVDFGCGSGILAIAALKLGAERVIGIDIDPQAIEASRDNAQRNGVSDQLELYLPEDQPKNFQADIVVANILAGPLRELSGLISGLVKPHGLMAISGILESQAPELLEVYSQWFAMNPATEREEWCRLDGIKKG</sequence>
<proteinExistence type="inferred from homology"/>
<protein>
    <recommendedName>
        <fullName evidence="1">Ribosomal protein L11 methyltransferase</fullName>
        <shortName evidence="1">L11 Mtase</shortName>
        <ecNumber evidence="1">2.1.1.-</ecNumber>
    </recommendedName>
</protein>
<organism>
    <name type="scientific">Tolumonas auensis (strain DSM 9187 / NBRC 110442 / TA 4)</name>
    <dbReference type="NCBI Taxonomy" id="595494"/>
    <lineage>
        <taxon>Bacteria</taxon>
        <taxon>Pseudomonadati</taxon>
        <taxon>Pseudomonadota</taxon>
        <taxon>Gammaproteobacteria</taxon>
        <taxon>Aeromonadales</taxon>
        <taxon>Aeromonadaceae</taxon>
        <taxon>Tolumonas</taxon>
    </lineage>
</organism>
<gene>
    <name evidence="1" type="primary">prmA</name>
    <name type="ordered locus">Tola_2532</name>
</gene>
<comment type="function">
    <text evidence="1">Methylates ribosomal protein L11.</text>
</comment>
<comment type="catalytic activity">
    <reaction evidence="1">
        <text>L-lysyl-[protein] + 3 S-adenosyl-L-methionine = N(6),N(6),N(6)-trimethyl-L-lysyl-[protein] + 3 S-adenosyl-L-homocysteine + 3 H(+)</text>
        <dbReference type="Rhea" id="RHEA:54192"/>
        <dbReference type="Rhea" id="RHEA-COMP:9752"/>
        <dbReference type="Rhea" id="RHEA-COMP:13826"/>
        <dbReference type="ChEBI" id="CHEBI:15378"/>
        <dbReference type="ChEBI" id="CHEBI:29969"/>
        <dbReference type="ChEBI" id="CHEBI:57856"/>
        <dbReference type="ChEBI" id="CHEBI:59789"/>
        <dbReference type="ChEBI" id="CHEBI:61961"/>
    </reaction>
</comment>
<comment type="subcellular location">
    <subcellularLocation>
        <location evidence="1">Cytoplasm</location>
    </subcellularLocation>
</comment>
<comment type="similarity">
    <text evidence="1">Belongs to the methyltransferase superfamily. PrmA family.</text>
</comment>
<reference key="1">
    <citation type="submission" date="2009-05" db="EMBL/GenBank/DDBJ databases">
        <title>Complete sequence of Tolumonas auensis DSM 9187.</title>
        <authorList>
            <consortium name="US DOE Joint Genome Institute"/>
            <person name="Lucas S."/>
            <person name="Copeland A."/>
            <person name="Lapidus A."/>
            <person name="Glavina del Rio T."/>
            <person name="Tice H."/>
            <person name="Bruce D."/>
            <person name="Goodwin L."/>
            <person name="Pitluck S."/>
            <person name="Chertkov O."/>
            <person name="Brettin T."/>
            <person name="Detter J.C."/>
            <person name="Han C."/>
            <person name="Larimer F."/>
            <person name="Land M."/>
            <person name="Hauser L."/>
            <person name="Kyrpides N."/>
            <person name="Mikhailova N."/>
            <person name="Spring S."/>
            <person name="Beller H."/>
        </authorList>
    </citation>
    <scope>NUCLEOTIDE SEQUENCE [LARGE SCALE GENOMIC DNA]</scope>
    <source>
        <strain>DSM 9187 / NBRC 110442 / TA 4</strain>
    </source>
</reference>
<keyword id="KW-0963">Cytoplasm</keyword>
<keyword id="KW-0489">Methyltransferase</keyword>
<keyword id="KW-1185">Reference proteome</keyword>
<keyword id="KW-0949">S-adenosyl-L-methionine</keyword>
<keyword id="KW-0808">Transferase</keyword>
<accession>C4LAF1</accession>
<dbReference type="EC" id="2.1.1.-" evidence="1"/>
<dbReference type="EMBL" id="CP001616">
    <property type="protein sequence ID" value="ACQ94126.1"/>
    <property type="molecule type" value="Genomic_DNA"/>
</dbReference>
<dbReference type="RefSeq" id="WP_015879575.1">
    <property type="nucleotide sequence ID" value="NC_012691.1"/>
</dbReference>
<dbReference type="SMR" id="C4LAF1"/>
<dbReference type="STRING" id="595494.Tola_2532"/>
<dbReference type="KEGG" id="tau:Tola_2532"/>
<dbReference type="eggNOG" id="COG2264">
    <property type="taxonomic scope" value="Bacteria"/>
</dbReference>
<dbReference type="HOGENOM" id="CLU_049382_4_1_6"/>
<dbReference type="OrthoDB" id="9785995at2"/>
<dbReference type="Proteomes" id="UP000009073">
    <property type="component" value="Chromosome"/>
</dbReference>
<dbReference type="GO" id="GO:0005829">
    <property type="term" value="C:cytosol"/>
    <property type="evidence" value="ECO:0007669"/>
    <property type="project" value="TreeGrafter"/>
</dbReference>
<dbReference type="GO" id="GO:0016279">
    <property type="term" value="F:protein-lysine N-methyltransferase activity"/>
    <property type="evidence" value="ECO:0007669"/>
    <property type="project" value="TreeGrafter"/>
</dbReference>
<dbReference type="GO" id="GO:0032259">
    <property type="term" value="P:methylation"/>
    <property type="evidence" value="ECO:0007669"/>
    <property type="project" value="UniProtKB-KW"/>
</dbReference>
<dbReference type="CDD" id="cd02440">
    <property type="entry name" value="AdoMet_MTases"/>
    <property type="match status" value="1"/>
</dbReference>
<dbReference type="Gene3D" id="3.40.50.150">
    <property type="entry name" value="Vaccinia Virus protein VP39"/>
    <property type="match status" value="1"/>
</dbReference>
<dbReference type="HAMAP" id="MF_00735">
    <property type="entry name" value="Methyltr_PrmA"/>
    <property type="match status" value="1"/>
</dbReference>
<dbReference type="InterPro" id="IPR050078">
    <property type="entry name" value="Ribosomal_L11_MeTrfase_PrmA"/>
</dbReference>
<dbReference type="InterPro" id="IPR004498">
    <property type="entry name" value="Ribosomal_PrmA_MeTrfase"/>
</dbReference>
<dbReference type="InterPro" id="IPR029063">
    <property type="entry name" value="SAM-dependent_MTases_sf"/>
</dbReference>
<dbReference type="NCBIfam" id="TIGR00406">
    <property type="entry name" value="prmA"/>
    <property type="match status" value="1"/>
</dbReference>
<dbReference type="PANTHER" id="PTHR43648">
    <property type="entry name" value="ELECTRON TRANSFER FLAVOPROTEIN BETA SUBUNIT LYSINE METHYLTRANSFERASE"/>
    <property type="match status" value="1"/>
</dbReference>
<dbReference type="PANTHER" id="PTHR43648:SF1">
    <property type="entry name" value="ELECTRON TRANSFER FLAVOPROTEIN BETA SUBUNIT LYSINE METHYLTRANSFERASE"/>
    <property type="match status" value="1"/>
</dbReference>
<dbReference type="Pfam" id="PF06325">
    <property type="entry name" value="PrmA"/>
    <property type="match status" value="1"/>
</dbReference>
<dbReference type="PIRSF" id="PIRSF000401">
    <property type="entry name" value="RPL11_MTase"/>
    <property type="match status" value="1"/>
</dbReference>
<dbReference type="SUPFAM" id="SSF53335">
    <property type="entry name" value="S-adenosyl-L-methionine-dependent methyltransferases"/>
    <property type="match status" value="1"/>
</dbReference>